<name>ATPB1_BURM7</name>
<organism>
    <name type="scientific">Burkholderia mallei (strain NCTC 10247)</name>
    <dbReference type="NCBI Taxonomy" id="320389"/>
    <lineage>
        <taxon>Bacteria</taxon>
        <taxon>Pseudomonadati</taxon>
        <taxon>Pseudomonadota</taxon>
        <taxon>Betaproteobacteria</taxon>
        <taxon>Burkholderiales</taxon>
        <taxon>Burkholderiaceae</taxon>
        <taxon>Burkholderia</taxon>
        <taxon>pseudomallei group</taxon>
    </lineage>
</organism>
<gene>
    <name evidence="1" type="primary">atpD1</name>
    <name type="ordered locus">BMA10247_3015</name>
</gene>
<protein>
    <recommendedName>
        <fullName evidence="1">ATP synthase subunit beta 1</fullName>
        <ecNumber evidence="1">7.1.2.2</ecNumber>
    </recommendedName>
    <alternativeName>
        <fullName evidence="1">ATP synthase F1 sector subunit beta 1</fullName>
    </alternativeName>
    <alternativeName>
        <fullName evidence="1">F-ATPase subunit beta 1</fullName>
    </alternativeName>
</protein>
<comment type="function">
    <text evidence="1">Produces ATP from ADP in the presence of a proton gradient across the membrane. The catalytic sites are hosted primarily by the beta subunits.</text>
</comment>
<comment type="catalytic activity">
    <reaction evidence="1">
        <text>ATP + H2O + 4 H(+)(in) = ADP + phosphate + 5 H(+)(out)</text>
        <dbReference type="Rhea" id="RHEA:57720"/>
        <dbReference type="ChEBI" id="CHEBI:15377"/>
        <dbReference type="ChEBI" id="CHEBI:15378"/>
        <dbReference type="ChEBI" id="CHEBI:30616"/>
        <dbReference type="ChEBI" id="CHEBI:43474"/>
        <dbReference type="ChEBI" id="CHEBI:456216"/>
        <dbReference type="EC" id="7.1.2.2"/>
    </reaction>
</comment>
<comment type="subunit">
    <text evidence="1">F-type ATPases have 2 components, CF(1) - the catalytic core - and CF(0) - the membrane proton channel. CF(1) has five subunits: alpha(3), beta(3), gamma(1), delta(1), epsilon(1). CF(0) has three main subunits: a(1), b(2) and c(9-12). The alpha and beta chains form an alternating ring which encloses part of the gamma chain. CF(1) is attached to CF(0) by a central stalk formed by the gamma and epsilon chains, while a peripheral stalk is formed by the delta and b chains.</text>
</comment>
<comment type="subcellular location">
    <subcellularLocation>
        <location evidence="1">Cell inner membrane</location>
        <topology evidence="1">Peripheral membrane protein</topology>
    </subcellularLocation>
</comment>
<comment type="similarity">
    <text evidence="1">Belongs to the ATPase alpha/beta chains family.</text>
</comment>
<dbReference type="EC" id="7.1.2.2" evidence="1"/>
<dbReference type="EMBL" id="CP000548">
    <property type="protein sequence ID" value="ABO04930.1"/>
    <property type="molecule type" value="Genomic_DNA"/>
</dbReference>
<dbReference type="SMR" id="A3MQJ9"/>
<dbReference type="KEGG" id="bmn:BMA10247_3015"/>
<dbReference type="GO" id="GO:0005886">
    <property type="term" value="C:plasma membrane"/>
    <property type="evidence" value="ECO:0007669"/>
    <property type="project" value="UniProtKB-SubCell"/>
</dbReference>
<dbReference type="GO" id="GO:0045259">
    <property type="term" value="C:proton-transporting ATP synthase complex"/>
    <property type="evidence" value="ECO:0007669"/>
    <property type="project" value="UniProtKB-KW"/>
</dbReference>
<dbReference type="GO" id="GO:0005524">
    <property type="term" value="F:ATP binding"/>
    <property type="evidence" value="ECO:0007669"/>
    <property type="project" value="UniProtKB-UniRule"/>
</dbReference>
<dbReference type="GO" id="GO:0016887">
    <property type="term" value="F:ATP hydrolysis activity"/>
    <property type="evidence" value="ECO:0007669"/>
    <property type="project" value="InterPro"/>
</dbReference>
<dbReference type="GO" id="GO:0046933">
    <property type="term" value="F:proton-transporting ATP synthase activity, rotational mechanism"/>
    <property type="evidence" value="ECO:0007669"/>
    <property type="project" value="UniProtKB-UniRule"/>
</dbReference>
<dbReference type="CDD" id="cd18110">
    <property type="entry name" value="ATP-synt_F1_beta_C"/>
    <property type="match status" value="1"/>
</dbReference>
<dbReference type="CDD" id="cd18115">
    <property type="entry name" value="ATP-synt_F1_beta_N"/>
    <property type="match status" value="1"/>
</dbReference>
<dbReference type="CDD" id="cd01133">
    <property type="entry name" value="F1-ATPase_beta_CD"/>
    <property type="match status" value="1"/>
</dbReference>
<dbReference type="FunFam" id="1.10.1140.10:FF:000001">
    <property type="entry name" value="ATP synthase subunit beta"/>
    <property type="match status" value="1"/>
</dbReference>
<dbReference type="FunFam" id="3.40.50.300:FF:000004">
    <property type="entry name" value="ATP synthase subunit beta"/>
    <property type="match status" value="1"/>
</dbReference>
<dbReference type="Gene3D" id="2.40.10.170">
    <property type="match status" value="1"/>
</dbReference>
<dbReference type="Gene3D" id="1.10.1140.10">
    <property type="entry name" value="Bovine Mitochondrial F1-atpase, Atp Synthase Beta Chain, Chain D, domain 3"/>
    <property type="match status" value="1"/>
</dbReference>
<dbReference type="Gene3D" id="3.40.50.300">
    <property type="entry name" value="P-loop containing nucleotide triphosphate hydrolases"/>
    <property type="match status" value="1"/>
</dbReference>
<dbReference type="HAMAP" id="MF_01347">
    <property type="entry name" value="ATP_synth_beta_bact"/>
    <property type="match status" value="1"/>
</dbReference>
<dbReference type="InterPro" id="IPR003593">
    <property type="entry name" value="AAA+_ATPase"/>
</dbReference>
<dbReference type="InterPro" id="IPR055190">
    <property type="entry name" value="ATP-synt_VA_C"/>
</dbReference>
<dbReference type="InterPro" id="IPR005722">
    <property type="entry name" value="ATP_synth_F1_bsu"/>
</dbReference>
<dbReference type="InterPro" id="IPR020003">
    <property type="entry name" value="ATPase_a/bsu_AS"/>
</dbReference>
<dbReference type="InterPro" id="IPR050053">
    <property type="entry name" value="ATPase_alpha/beta_chains"/>
</dbReference>
<dbReference type="InterPro" id="IPR004100">
    <property type="entry name" value="ATPase_F1/V1/A1_a/bsu_N"/>
</dbReference>
<dbReference type="InterPro" id="IPR036121">
    <property type="entry name" value="ATPase_F1/V1/A1_a/bsu_N_sf"/>
</dbReference>
<dbReference type="InterPro" id="IPR000194">
    <property type="entry name" value="ATPase_F1/V1/A1_a/bsu_nucl-bd"/>
</dbReference>
<dbReference type="InterPro" id="IPR024034">
    <property type="entry name" value="ATPase_F1/V1_b/a_C"/>
</dbReference>
<dbReference type="InterPro" id="IPR027417">
    <property type="entry name" value="P-loop_NTPase"/>
</dbReference>
<dbReference type="NCBIfam" id="TIGR01039">
    <property type="entry name" value="atpD"/>
    <property type="match status" value="1"/>
</dbReference>
<dbReference type="PANTHER" id="PTHR15184">
    <property type="entry name" value="ATP SYNTHASE"/>
    <property type="match status" value="1"/>
</dbReference>
<dbReference type="PANTHER" id="PTHR15184:SF71">
    <property type="entry name" value="ATP SYNTHASE SUBUNIT BETA, MITOCHONDRIAL"/>
    <property type="match status" value="1"/>
</dbReference>
<dbReference type="Pfam" id="PF00006">
    <property type="entry name" value="ATP-synt_ab"/>
    <property type="match status" value="1"/>
</dbReference>
<dbReference type="Pfam" id="PF02874">
    <property type="entry name" value="ATP-synt_ab_N"/>
    <property type="match status" value="1"/>
</dbReference>
<dbReference type="Pfam" id="PF22919">
    <property type="entry name" value="ATP-synt_VA_C"/>
    <property type="match status" value="1"/>
</dbReference>
<dbReference type="SMART" id="SM00382">
    <property type="entry name" value="AAA"/>
    <property type="match status" value="1"/>
</dbReference>
<dbReference type="SUPFAM" id="SSF47917">
    <property type="entry name" value="C-terminal domain of alpha and beta subunits of F1 ATP synthase"/>
    <property type="match status" value="1"/>
</dbReference>
<dbReference type="SUPFAM" id="SSF50615">
    <property type="entry name" value="N-terminal domain of alpha and beta subunits of F1 ATP synthase"/>
    <property type="match status" value="1"/>
</dbReference>
<dbReference type="SUPFAM" id="SSF52540">
    <property type="entry name" value="P-loop containing nucleoside triphosphate hydrolases"/>
    <property type="match status" value="1"/>
</dbReference>
<dbReference type="PROSITE" id="PS00152">
    <property type="entry name" value="ATPASE_ALPHA_BETA"/>
    <property type="match status" value="1"/>
</dbReference>
<accession>A3MQJ9</accession>
<sequence>MSTAALVEGKIVQCIGAVIDVEFPRESMPKIYDALILEGSELTLEVQQQLGDGVVRTICLGASDGLRRGVVVKNTGNPISVPVGKPTLGRIMDVLGRPIDEAGPIESENKRSIHQKAPAFDELSPSTELLETGIKVIDLICPFAKGGKVGLFGGAGVGKTVNMMELINNIAKEHGGYSVFAGVGERTREGNDFYHEMKDSNVLDKVALVYGQMNEPPGNRLRVALTGLTMAEHFRDEGLDVLFFVDNIYRFTLAGTEVSALLGRMPSAVGYQPTLAEEMGKLQERITSTKKGSITSVQAVYVPADDLTDPSPATTFGHLDATVVLSRDIASLGIYPAVDPLDSTSRQIDPNVIGEEHYSITRRVQQTLQRYKELRDIIAILGMDELSPEDKLSVARARKIQRFLSQPFHVAEVFTGSPGKYVPLKETIRGFKMIVDGECDHLPEQAFYMVGTIDEAFEKAKKIQ</sequence>
<keyword id="KW-0066">ATP synthesis</keyword>
<keyword id="KW-0067">ATP-binding</keyword>
<keyword id="KW-0997">Cell inner membrane</keyword>
<keyword id="KW-1003">Cell membrane</keyword>
<keyword id="KW-0139">CF(1)</keyword>
<keyword id="KW-0375">Hydrogen ion transport</keyword>
<keyword id="KW-0406">Ion transport</keyword>
<keyword id="KW-0472">Membrane</keyword>
<keyword id="KW-0547">Nucleotide-binding</keyword>
<keyword id="KW-1278">Translocase</keyword>
<keyword id="KW-0813">Transport</keyword>
<feature type="chain" id="PRO_0000339488" description="ATP synthase subunit beta 1">
    <location>
        <begin position="1"/>
        <end position="464"/>
    </location>
</feature>
<feature type="binding site" evidence="1">
    <location>
        <begin position="153"/>
        <end position="160"/>
    </location>
    <ligand>
        <name>ATP</name>
        <dbReference type="ChEBI" id="CHEBI:30616"/>
    </ligand>
</feature>
<reference key="1">
    <citation type="journal article" date="2010" name="Genome Biol. Evol.">
        <title>Continuing evolution of Burkholderia mallei through genome reduction and large-scale rearrangements.</title>
        <authorList>
            <person name="Losada L."/>
            <person name="Ronning C.M."/>
            <person name="DeShazer D."/>
            <person name="Woods D."/>
            <person name="Fedorova N."/>
            <person name="Kim H.S."/>
            <person name="Shabalina S.A."/>
            <person name="Pearson T.R."/>
            <person name="Brinkac L."/>
            <person name="Tan P."/>
            <person name="Nandi T."/>
            <person name="Crabtree J."/>
            <person name="Badger J."/>
            <person name="Beckstrom-Sternberg S."/>
            <person name="Saqib M."/>
            <person name="Schutzer S.E."/>
            <person name="Keim P."/>
            <person name="Nierman W.C."/>
        </authorList>
    </citation>
    <scope>NUCLEOTIDE SEQUENCE [LARGE SCALE GENOMIC DNA]</scope>
    <source>
        <strain>NCTC 10247</strain>
    </source>
</reference>
<proteinExistence type="inferred from homology"/>
<evidence type="ECO:0000255" key="1">
    <source>
        <dbReference type="HAMAP-Rule" id="MF_01347"/>
    </source>
</evidence>